<dbReference type="EC" id="2.4.2.17" evidence="1"/>
<dbReference type="EMBL" id="CP000826">
    <property type="protein sequence ID" value="ABV40720.1"/>
    <property type="molecule type" value="Genomic_DNA"/>
</dbReference>
<dbReference type="SMR" id="A8GC80"/>
<dbReference type="STRING" id="399741.Spro_1616"/>
<dbReference type="KEGG" id="spe:Spro_1616"/>
<dbReference type="eggNOG" id="COG0040">
    <property type="taxonomic scope" value="Bacteria"/>
</dbReference>
<dbReference type="HOGENOM" id="CLU_038115_1_0_6"/>
<dbReference type="OrthoDB" id="9801867at2"/>
<dbReference type="UniPathway" id="UPA00031">
    <property type="reaction ID" value="UER00006"/>
</dbReference>
<dbReference type="GO" id="GO:0005737">
    <property type="term" value="C:cytoplasm"/>
    <property type="evidence" value="ECO:0007669"/>
    <property type="project" value="UniProtKB-SubCell"/>
</dbReference>
<dbReference type="GO" id="GO:0005524">
    <property type="term" value="F:ATP binding"/>
    <property type="evidence" value="ECO:0007669"/>
    <property type="project" value="UniProtKB-KW"/>
</dbReference>
<dbReference type="GO" id="GO:0003879">
    <property type="term" value="F:ATP phosphoribosyltransferase activity"/>
    <property type="evidence" value="ECO:0007669"/>
    <property type="project" value="UniProtKB-UniRule"/>
</dbReference>
<dbReference type="GO" id="GO:0000287">
    <property type="term" value="F:magnesium ion binding"/>
    <property type="evidence" value="ECO:0007669"/>
    <property type="project" value="UniProtKB-UniRule"/>
</dbReference>
<dbReference type="GO" id="GO:0000105">
    <property type="term" value="P:L-histidine biosynthetic process"/>
    <property type="evidence" value="ECO:0007669"/>
    <property type="project" value="UniProtKB-UniRule"/>
</dbReference>
<dbReference type="CDD" id="cd13592">
    <property type="entry name" value="PBP2_HisGL2"/>
    <property type="match status" value="1"/>
</dbReference>
<dbReference type="FunFam" id="3.30.70.120:FF:000002">
    <property type="entry name" value="ATP phosphoribosyltransferase"/>
    <property type="match status" value="1"/>
</dbReference>
<dbReference type="FunFam" id="3.40.190.10:FF:000008">
    <property type="entry name" value="ATP phosphoribosyltransferase"/>
    <property type="match status" value="1"/>
</dbReference>
<dbReference type="Gene3D" id="3.30.70.120">
    <property type="match status" value="1"/>
</dbReference>
<dbReference type="Gene3D" id="3.40.190.10">
    <property type="entry name" value="Periplasmic binding protein-like II"/>
    <property type="match status" value="2"/>
</dbReference>
<dbReference type="HAMAP" id="MF_00079">
    <property type="entry name" value="HisG_Long"/>
    <property type="match status" value="1"/>
</dbReference>
<dbReference type="InterPro" id="IPR020621">
    <property type="entry name" value="ATP-PRT_HisG_long"/>
</dbReference>
<dbReference type="InterPro" id="IPR013820">
    <property type="entry name" value="ATP_PRibTrfase_cat"/>
</dbReference>
<dbReference type="InterPro" id="IPR018198">
    <property type="entry name" value="ATP_PRibTrfase_CS"/>
</dbReference>
<dbReference type="InterPro" id="IPR001348">
    <property type="entry name" value="ATP_PRibTrfase_HisG"/>
</dbReference>
<dbReference type="InterPro" id="IPR013115">
    <property type="entry name" value="HisG_C"/>
</dbReference>
<dbReference type="InterPro" id="IPR011322">
    <property type="entry name" value="N-reg_PII-like_a/b"/>
</dbReference>
<dbReference type="InterPro" id="IPR015867">
    <property type="entry name" value="N-reg_PII/ATP_PRibTrfase_C"/>
</dbReference>
<dbReference type="NCBIfam" id="TIGR00070">
    <property type="entry name" value="hisG"/>
    <property type="match status" value="1"/>
</dbReference>
<dbReference type="NCBIfam" id="TIGR03455">
    <property type="entry name" value="HisG_C-term"/>
    <property type="match status" value="1"/>
</dbReference>
<dbReference type="PANTHER" id="PTHR21403:SF8">
    <property type="entry name" value="ATP PHOSPHORIBOSYLTRANSFERASE"/>
    <property type="match status" value="1"/>
</dbReference>
<dbReference type="PANTHER" id="PTHR21403">
    <property type="entry name" value="ATP PHOSPHORIBOSYLTRANSFERASE ATP-PRTASE"/>
    <property type="match status" value="1"/>
</dbReference>
<dbReference type="Pfam" id="PF01634">
    <property type="entry name" value="HisG"/>
    <property type="match status" value="1"/>
</dbReference>
<dbReference type="Pfam" id="PF08029">
    <property type="entry name" value="HisG_C"/>
    <property type="match status" value="1"/>
</dbReference>
<dbReference type="SUPFAM" id="SSF54913">
    <property type="entry name" value="GlnB-like"/>
    <property type="match status" value="1"/>
</dbReference>
<dbReference type="SUPFAM" id="SSF53850">
    <property type="entry name" value="Periplasmic binding protein-like II"/>
    <property type="match status" value="1"/>
</dbReference>
<dbReference type="PROSITE" id="PS01316">
    <property type="entry name" value="ATP_P_PHORIBOSYLTR"/>
    <property type="match status" value="1"/>
</dbReference>
<protein>
    <recommendedName>
        <fullName evidence="1">ATP phosphoribosyltransferase</fullName>
        <shortName evidence="1">ATP-PRT</shortName>
        <shortName evidence="1">ATP-PRTase</shortName>
        <ecNumber evidence="1">2.4.2.17</ecNumber>
    </recommendedName>
</protein>
<organism>
    <name type="scientific">Serratia proteamaculans (strain 568)</name>
    <dbReference type="NCBI Taxonomy" id="399741"/>
    <lineage>
        <taxon>Bacteria</taxon>
        <taxon>Pseudomonadati</taxon>
        <taxon>Pseudomonadota</taxon>
        <taxon>Gammaproteobacteria</taxon>
        <taxon>Enterobacterales</taxon>
        <taxon>Yersiniaceae</taxon>
        <taxon>Serratia</taxon>
    </lineage>
</organism>
<comment type="function">
    <text evidence="1">Catalyzes the condensation of ATP and 5-phosphoribose 1-diphosphate to form N'-(5'-phosphoribosyl)-ATP (PR-ATP). Has a crucial role in the pathway because the rate of histidine biosynthesis seems to be controlled primarily by regulation of HisG enzymatic activity.</text>
</comment>
<comment type="catalytic activity">
    <reaction evidence="1">
        <text>1-(5-phospho-beta-D-ribosyl)-ATP + diphosphate = 5-phospho-alpha-D-ribose 1-diphosphate + ATP</text>
        <dbReference type="Rhea" id="RHEA:18473"/>
        <dbReference type="ChEBI" id="CHEBI:30616"/>
        <dbReference type="ChEBI" id="CHEBI:33019"/>
        <dbReference type="ChEBI" id="CHEBI:58017"/>
        <dbReference type="ChEBI" id="CHEBI:73183"/>
        <dbReference type="EC" id="2.4.2.17"/>
    </reaction>
</comment>
<comment type="cofactor">
    <cofactor evidence="1">
        <name>Mg(2+)</name>
        <dbReference type="ChEBI" id="CHEBI:18420"/>
    </cofactor>
</comment>
<comment type="activity regulation">
    <text evidence="1">Feedback inhibited by histidine.</text>
</comment>
<comment type="pathway">
    <text evidence="1">Amino-acid biosynthesis; L-histidine biosynthesis; L-histidine from 5-phospho-alpha-D-ribose 1-diphosphate: step 1/9.</text>
</comment>
<comment type="subunit">
    <text evidence="1">Equilibrium between an active dimeric form, an inactive hexameric form and higher aggregates. Interconversion between the various forms is largely reversible and is influenced by the natural substrates and inhibitors of the enzyme.</text>
</comment>
<comment type="subcellular location">
    <subcellularLocation>
        <location evidence="1">Cytoplasm</location>
    </subcellularLocation>
</comment>
<comment type="similarity">
    <text evidence="1">Belongs to the ATP phosphoribosyltransferase family. Long subfamily.</text>
</comment>
<feature type="chain" id="PRO_1000057526" description="ATP phosphoribosyltransferase">
    <location>
        <begin position="1"/>
        <end position="299"/>
    </location>
</feature>
<evidence type="ECO:0000255" key="1">
    <source>
        <dbReference type="HAMAP-Rule" id="MF_00079"/>
    </source>
</evidence>
<keyword id="KW-0028">Amino-acid biosynthesis</keyword>
<keyword id="KW-0067">ATP-binding</keyword>
<keyword id="KW-0963">Cytoplasm</keyword>
<keyword id="KW-0328">Glycosyltransferase</keyword>
<keyword id="KW-0368">Histidine biosynthesis</keyword>
<keyword id="KW-0460">Magnesium</keyword>
<keyword id="KW-0479">Metal-binding</keyword>
<keyword id="KW-0547">Nucleotide-binding</keyword>
<keyword id="KW-0808">Transferase</keyword>
<gene>
    <name evidence="1" type="primary">hisG</name>
    <name type="ordered locus">Spro_1616</name>
</gene>
<reference key="1">
    <citation type="submission" date="2007-09" db="EMBL/GenBank/DDBJ databases">
        <title>Complete sequence of chromosome of Serratia proteamaculans 568.</title>
        <authorList>
            <consortium name="US DOE Joint Genome Institute"/>
            <person name="Copeland A."/>
            <person name="Lucas S."/>
            <person name="Lapidus A."/>
            <person name="Barry K."/>
            <person name="Glavina del Rio T."/>
            <person name="Dalin E."/>
            <person name="Tice H."/>
            <person name="Pitluck S."/>
            <person name="Chain P."/>
            <person name="Malfatti S."/>
            <person name="Shin M."/>
            <person name="Vergez L."/>
            <person name="Schmutz J."/>
            <person name="Larimer F."/>
            <person name="Land M."/>
            <person name="Hauser L."/>
            <person name="Kyrpides N."/>
            <person name="Kim E."/>
            <person name="Taghavi S."/>
            <person name="Newman L."/>
            <person name="Vangronsveld J."/>
            <person name="van der Lelie D."/>
            <person name="Richardson P."/>
        </authorList>
    </citation>
    <scope>NUCLEOTIDE SEQUENCE [LARGE SCALE GENOMIC DNA]</scope>
    <source>
        <strain>568</strain>
    </source>
</reference>
<accession>A8GC80</accession>
<name>HIS1_SERP5</name>
<proteinExistence type="inferred from homology"/>
<sequence>MLDKTRLRIAMQKSGRLSDESQELLARCGIKINLQQQRLIAFAENMPIDILRVRDDDIPGLVMDGVVDLGIIGENVLEEELLTRRAQGEDPRYFTLRRLDFGGCRLSLATSLDSEYTGPQSLQDARIATSYPHLLKQYLDKQGVRFKSCLLNGSVEVAPRAGLADAICDLVSTGATLEANGLREVEVIYRSKACLIQRDGEMPEAKQQLIDRLMTRIQGVIQARESKYIMLHAPSERLDEIVALLPGAERPTILPLAGAQNRVAMHMVSSETLFWETMEKLKALGASSILVLPIEKMME</sequence>